<sequence>MTTTLIPAQQYRDIFVAGKPLIDLRAPIEFNRGAFPSSVNLPLMVDKEREKVGTCYKQQGQQAAIALGHSLVHGAVKQQRIDAWLGFLAAQPEAYLYCFRGGLRSQLTQQWLKEAGATVPYVQGGYKGMRQYLIGVIETTPSQQPLLSLSGMTGSGKTDFLIQRKEAVDLEGIANHRGSSFGKNIDPQPTQINFENQLAIALLRHQQDNHSCLLLEDESFLIGRSALPQSFYNAMQAADILVLEEADDIRLNRLLDEYVHKMHQGFVERLGIEAGFNAFSQYLLQSLTSIRKRLGGKQYQELQDTMQQALSQQLNQNQTSQHLAWINLLLQKYYDPMYEYQLEKKAHRVLFRGNHQAMHEWLDNLSQDSLSQENLG</sequence>
<protein>
    <recommendedName>
        <fullName evidence="1">tRNA 2-selenouridine synthase</fullName>
        <ecNumber evidence="1">2.9.1.3</ecNumber>
    </recommendedName>
</protein>
<dbReference type="EC" id="2.9.1.3" evidence="1"/>
<dbReference type="EMBL" id="AE014299">
    <property type="protein sequence ID" value="AAN53282.1"/>
    <property type="molecule type" value="Genomic_DNA"/>
</dbReference>
<dbReference type="RefSeq" id="NP_715837.1">
    <property type="nucleotide sequence ID" value="NC_004347.2"/>
</dbReference>
<dbReference type="RefSeq" id="WP_011070591.1">
    <property type="nucleotide sequence ID" value="NC_004347.2"/>
</dbReference>
<dbReference type="SMR" id="Q8EKA0"/>
<dbReference type="STRING" id="211586.SO_0195"/>
<dbReference type="PaxDb" id="211586-SO_0195"/>
<dbReference type="KEGG" id="son:SO_0195"/>
<dbReference type="PATRIC" id="fig|211586.12.peg.183"/>
<dbReference type="eggNOG" id="COG2603">
    <property type="taxonomic scope" value="Bacteria"/>
</dbReference>
<dbReference type="HOGENOM" id="CLU_043456_1_0_6"/>
<dbReference type="OrthoDB" id="9808735at2"/>
<dbReference type="PhylomeDB" id="Q8EKA0"/>
<dbReference type="BioCyc" id="SONE211586:G1GMP-181-MONOMER"/>
<dbReference type="Proteomes" id="UP000008186">
    <property type="component" value="Chromosome"/>
</dbReference>
<dbReference type="GO" id="GO:0016765">
    <property type="term" value="F:transferase activity, transferring alkyl or aryl (other than methyl) groups"/>
    <property type="evidence" value="ECO:0007669"/>
    <property type="project" value="UniProtKB-UniRule"/>
</dbReference>
<dbReference type="GO" id="GO:0043828">
    <property type="term" value="F:tRNA 2-selenouridine synthase activity"/>
    <property type="evidence" value="ECO:0000318"/>
    <property type="project" value="GO_Central"/>
</dbReference>
<dbReference type="GO" id="GO:0002098">
    <property type="term" value="P:tRNA wobble uridine modification"/>
    <property type="evidence" value="ECO:0000318"/>
    <property type="project" value="GO_Central"/>
</dbReference>
<dbReference type="Gene3D" id="3.40.250.10">
    <property type="entry name" value="Rhodanese-like domain"/>
    <property type="match status" value="1"/>
</dbReference>
<dbReference type="HAMAP" id="MF_01622">
    <property type="entry name" value="tRNA_sel_U_synth"/>
    <property type="match status" value="1"/>
</dbReference>
<dbReference type="InterPro" id="IPR001763">
    <property type="entry name" value="Rhodanese-like_dom"/>
</dbReference>
<dbReference type="InterPro" id="IPR036873">
    <property type="entry name" value="Rhodanese-like_dom_sf"/>
</dbReference>
<dbReference type="InterPro" id="IPR017582">
    <property type="entry name" value="SelU"/>
</dbReference>
<dbReference type="NCBIfam" id="NF008750">
    <property type="entry name" value="PRK11784.1-2"/>
    <property type="match status" value="1"/>
</dbReference>
<dbReference type="NCBIfam" id="NF008751">
    <property type="entry name" value="PRK11784.1-3"/>
    <property type="match status" value="1"/>
</dbReference>
<dbReference type="NCBIfam" id="TIGR03167">
    <property type="entry name" value="tRNA_sel_U_synt"/>
    <property type="match status" value="1"/>
</dbReference>
<dbReference type="PANTHER" id="PTHR30401">
    <property type="entry name" value="TRNA 2-SELENOURIDINE SYNTHASE"/>
    <property type="match status" value="1"/>
</dbReference>
<dbReference type="PANTHER" id="PTHR30401:SF0">
    <property type="entry name" value="TRNA 2-SELENOURIDINE SYNTHASE"/>
    <property type="match status" value="1"/>
</dbReference>
<dbReference type="Pfam" id="PF00581">
    <property type="entry name" value="Rhodanese"/>
    <property type="match status" value="1"/>
</dbReference>
<dbReference type="SMART" id="SM00450">
    <property type="entry name" value="RHOD"/>
    <property type="match status" value="1"/>
</dbReference>
<dbReference type="SUPFAM" id="SSF52821">
    <property type="entry name" value="Rhodanese/Cell cycle control phosphatase"/>
    <property type="match status" value="1"/>
</dbReference>
<dbReference type="PROSITE" id="PS50206">
    <property type="entry name" value="RHODANESE_3"/>
    <property type="match status" value="1"/>
</dbReference>
<feature type="chain" id="PRO_0000210876" description="tRNA 2-selenouridine synthase">
    <location>
        <begin position="1"/>
        <end position="376"/>
    </location>
</feature>
<feature type="domain" description="Rhodanese" evidence="1">
    <location>
        <begin position="15"/>
        <end position="138"/>
    </location>
</feature>
<feature type="active site" description="S-selanylcysteine intermediate" evidence="1">
    <location>
        <position position="98"/>
    </location>
</feature>
<organism>
    <name type="scientific">Shewanella oneidensis (strain ATCC 700550 / JCM 31522 / CIP 106686 / LMG 19005 / NCIMB 14063 / MR-1)</name>
    <dbReference type="NCBI Taxonomy" id="211586"/>
    <lineage>
        <taxon>Bacteria</taxon>
        <taxon>Pseudomonadati</taxon>
        <taxon>Pseudomonadota</taxon>
        <taxon>Gammaproteobacteria</taxon>
        <taxon>Alteromonadales</taxon>
        <taxon>Shewanellaceae</taxon>
        <taxon>Shewanella</taxon>
    </lineage>
</organism>
<comment type="function">
    <text evidence="1">Involved in the post-transcriptional modification of the uridine at the wobble position (U34) of tRNA(Lys), tRNA(Glu) and tRNA(Gln). Catalyzes the conversion of 2-thiouridine (S2U-RNA) to 2-selenouridine (Se2U-RNA). Acts in a two-step process involving geranylation of 2-thiouridine (S2U) to S-geranyl-2-thiouridine (geS2U) and subsequent selenation of the latter derivative to 2-selenouridine (Se2U) in the tRNA chain.</text>
</comment>
<comment type="catalytic activity">
    <reaction evidence="1">
        <text>5-methylaminomethyl-2-thiouridine(34) in tRNA + selenophosphate + (2E)-geranyl diphosphate + H2O + H(+) = 5-methylaminomethyl-2-selenouridine(34) in tRNA + (2E)-thiogeraniol + phosphate + diphosphate</text>
        <dbReference type="Rhea" id="RHEA:42716"/>
        <dbReference type="Rhea" id="RHEA-COMP:10195"/>
        <dbReference type="Rhea" id="RHEA-COMP:10196"/>
        <dbReference type="ChEBI" id="CHEBI:15377"/>
        <dbReference type="ChEBI" id="CHEBI:15378"/>
        <dbReference type="ChEBI" id="CHEBI:16144"/>
        <dbReference type="ChEBI" id="CHEBI:33019"/>
        <dbReference type="ChEBI" id="CHEBI:43474"/>
        <dbReference type="ChEBI" id="CHEBI:58057"/>
        <dbReference type="ChEBI" id="CHEBI:74455"/>
        <dbReference type="ChEBI" id="CHEBI:82743"/>
        <dbReference type="ChEBI" id="CHEBI:143703"/>
        <dbReference type="EC" id="2.9.1.3"/>
    </reaction>
    <physiologicalReaction direction="left-to-right" evidence="1">
        <dbReference type="Rhea" id="RHEA:42717"/>
    </physiologicalReaction>
</comment>
<comment type="catalytic activity">
    <reaction evidence="1">
        <text>5-methylaminomethyl-2-thiouridine(34) in tRNA + (2E)-geranyl diphosphate = 5-methylaminomethyl-S-(2E)-geranyl-thiouridine(34) in tRNA + diphosphate</text>
        <dbReference type="Rhea" id="RHEA:14085"/>
        <dbReference type="Rhea" id="RHEA-COMP:10195"/>
        <dbReference type="Rhea" id="RHEA-COMP:14654"/>
        <dbReference type="ChEBI" id="CHEBI:33019"/>
        <dbReference type="ChEBI" id="CHEBI:58057"/>
        <dbReference type="ChEBI" id="CHEBI:74455"/>
        <dbReference type="ChEBI" id="CHEBI:140632"/>
    </reaction>
    <physiologicalReaction direction="left-to-right" evidence="1">
        <dbReference type="Rhea" id="RHEA:14086"/>
    </physiologicalReaction>
</comment>
<comment type="catalytic activity">
    <reaction evidence="1">
        <text>5-methylaminomethyl-S-(2E)-geranyl-thiouridine(34) in tRNA + selenophosphate + H(+) = 5-methylaminomethyl-2-(Se-phospho)selenouridine(34) in tRNA + (2E)-thiogeraniol</text>
        <dbReference type="Rhea" id="RHEA:60172"/>
        <dbReference type="Rhea" id="RHEA-COMP:14654"/>
        <dbReference type="Rhea" id="RHEA-COMP:15523"/>
        <dbReference type="ChEBI" id="CHEBI:15378"/>
        <dbReference type="ChEBI" id="CHEBI:16144"/>
        <dbReference type="ChEBI" id="CHEBI:140632"/>
        <dbReference type="ChEBI" id="CHEBI:143702"/>
        <dbReference type="ChEBI" id="CHEBI:143703"/>
    </reaction>
    <physiologicalReaction direction="left-to-right" evidence="1">
        <dbReference type="Rhea" id="RHEA:60173"/>
    </physiologicalReaction>
</comment>
<comment type="catalytic activity">
    <reaction evidence="1">
        <text>5-methylaminomethyl-2-(Se-phospho)selenouridine(34) in tRNA + H2O = 5-methylaminomethyl-2-selenouridine(34) in tRNA + phosphate</text>
        <dbReference type="Rhea" id="RHEA:60176"/>
        <dbReference type="Rhea" id="RHEA-COMP:10196"/>
        <dbReference type="Rhea" id="RHEA-COMP:15523"/>
        <dbReference type="ChEBI" id="CHEBI:15377"/>
        <dbReference type="ChEBI" id="CHEBI:43474"/>
        <dbReference type="ChEBI" id="CHEBI:82743"/>
        <dbReference type="ChEBI" id="CHEBI:143702"/>
    </reaction>
    <physiologicalReaction direction="left-to-right" evidence="1">
        <dbReference type="Rhea" id="RHEA:60177"/>
    </physiologicalReaction>
</comment>
<comment type="subunit">
    <text evidence="1">Monomer.</text>
</comment>
<comment type="similarity">
    <text evidence="1">Belongs to the SelU family.</text>
</comment>
<proteinExistence type="inferred from homology"/>
<accession>Q8EKA0</accession>
<name>SELU_SHEON</name>
<gene>
    <name evidence="1" type="primary">selU</name>
    <name type="ordered locus">SO_0195</name>
</gene>
<reference key="1">
    <citation type="journal article" date="2002" name="Nat. Biotechnol.">
        <title>Genome sequence of the dissimilatory metal ion-reducing bacterium Shewanella oneidensis.</title>
        <authorList>
            <person name="Heidelberg J.F."/>
            <person name="Paulsen I.T."/>
            <person name="Nelson K.E."/>
            <person name="Gaidos E.J."/>
            <person name="Nelson W.C."/>
            <person name="Read T.D."/>
            <person name="Eisen J.A."/>
            <person name="Seshadri R."/>
            <person name="Ward N.L."/>
            <person name="Methe B.A."/>
            <person name="Clayton R.A."/>
            <person name="Meyer T."/>
            <person name="Tsapin A."/>
            <person name="Scott J."/>
            <person name="Beanan M.J."/>
            <person name="Brinkac L.M."/>
            <person name="Daugherty S.C."/>
            <person name="DeBoy R.T."/>
            <person name="Dodson R.J."/>
            <person name="Durkin A.S."/>
            <person name="Haft D.H."/>
            <person name="Kolonay J.F."/>
            <person name="Madupu R."/>
            <person name="Peterson J.D."/>
            <person name="Umayam L.A."/>
            <person name="White O."/>
            <person name="Wolf A.M."/>
            <person name="Vamathevan J.J."/>
            <person name="Weidman J.F."/>
            <person name="Impraim M."/>
            <person name="Lee K."/>
            <person name="Berry K.J."/>
            <person name="Lee C."/>
            <person name="Mueller J."/>
            <person name="Khouri H.M."/>
            <person name="Gill J."/>
            <person name="Utterback T.R."/>
            <person name="McDonald L.A."/>
            <person name="Feldblyum T.V."/>
            <person name="Smith H.O."/>
            <person name="Venter J.C."/>
            <person name="Nealson K.H."/>
            <person name="Fraser C.M."/>
        </authorList>
    </citation>
    <scope>NUCLEOTIDE SEQUENCE [LARGE SCALE GENOMIC DNA]</scope>
    <source>
        <strain>ATCC 700550 / JCM 31522 / CIP 106686 / LMG 19005 / NCIMB 14063 / MR-1</strain>
    </source>
</reference>
<keyword id="KW-1185">Reference proteome</keyword>
<keyword id="KW-0711">Selenium</keyword>
<keyword id="KW-0808">Transferase</keyword>
<evidence type="ECO:0000255" key="1">
    <source>
        <dbReference type="HAMAP-Rule" id="MF_01622"/>
    </source>
</evidence>